<comment type="function">
    <text evidence="1">General inhibitor of pancreatic serine proteases: inhibits chymotrypsin, trypsin, elastases, factor X, kallikrein as well as a variety of other proteases.</text>
</comment>
<comment type="subunit">
    <text evidence="1">Homodimer.</text>
</comment>
<comment type="subcellular location">
    <subcellularLocation>
        <location evidence="1">Periplasm</location>
    </subcellularLocation>
</comment>
<comment type="similarity">
    <text evidence="1">Belongs to the protease inhibitor I11 (ecotin) family.</text>
</comment>
<proteinExistence type="inferred from homology"/>
<feature type="signal peptide" evidence="1">
    <location>
        <begin position="1"/>
        <end position="21"/>
    </location>
</feature>
<feature type="chain" id="PRO_1000132367" description="Ecotin">
    <location>
        <begin position="22"/>
        <end position="169"/>
    </location>
</feature>
<feature type="site" description="Reactive bond" evidence="1">
    <location>
        <begin position="110"/>
        <end position="111"/>
    </location>
</feature>
<feature type="disulfide bond" evidence="1">
    <location>
        <begin position="76"/>
        <end position="113"/>
    </location>
</feature>
<keyword id="KW-1015">Disulfide bond</keyword>
<keyword id="KW-0574">Periplasm</keyword>
<keyword id="KW-0646">Protease inhibitor</keyword>
<keyword id="KW-0722">Serine protease inhibitor</keyword>
<keyword id="KW-0732">Signal</keyword>
<accession>A9R289</accession>
<sequence length="169" mass="18871">MKKCSIILASVLLATSINAIADTPTPLNQQQPLEKIAPYPQAEKGMSRQVIFLEPQKDESRFKVELLIGKTLNVDCNRHMLGGNLETRTLSGWGFDYLVMDKISQPASTMMACPEDSKPQVKFVTANLGDAAMQRYNSRLPIVVYVPQGVEVKYRIWEAGEDIRSAQVK</sequence>
<protein>
    <recommendedName>
        <fullName evidence="1">Ecotin</fullName>
    </recommendedName>
</protein>
<dbReference type="EMBL" id="CP000901">
    <property type="protein sequence ID" value="ABX88280.1"/>
    <property type="molecule type" value="Genomic_DNA"/>
</dbReference>
<dbReference type="RefSeq" id="WP_002210815.1">
    <property type="nucleotide sequence ID" value="NZ_CP009935.1"/>
</dbReference>
<dbReference type="SMR" id="A9R289"/>
<dbReference type="MEROPS" id="I11.001"/>
<dbReference type="GeneID" id="57977350"/>
<dbReference type="KEGG" id="ypg:YpAngola_A1316"/>
<dbReference type="PATRIC" id="fig|349746.12.peg.2282"/>
<dbReference type="GO" id="GO:0042597">
    <property type="term" value="C:periplasmic space"/>
    <property type="evidence" value="ECO:0007669"/>
    <property type="project" value="UniProtKB-SubCell"/>
</dbReference>
<dbReference type="GO" id="GO:0004867">
    <property type="term" value="F:serine-type endopeptidase inhibitor activity"/>
    <property type="evidence" value="ECO:0007669"/>
    <property type="project" value="UniProtKB-UniRule"/>
</dbReference>
<dbReference type="CDD" id="cd00242">
    <property type="entry name" value="Ecotin"/>
    <property type="match status" value="1"/>
</dbReference>
<dbReference type="Gene3D" id="2.60.40.550">
    <property type="entry name" value="Ecotin"/>
    <property type="match status" value="1"/>
</dbReference>
<dbReference type="HAMAP" id="MF_00706">
    <property type="entry name" value="Ecotin"/>
    <property type="match status" value="1"/>
</dbReference>
<dbReference type="InterPro" id="IPR036198">
    <property type="entry name" value="Ecotin_sf"/>
</dbReference>
<dbReference type="InterPro" id="IPR005658">
    <property type="entry name" value="Prot_inh_ecotin"/>
</dbReference>
<dbReference type="InterPro" id="IPR023084">
    <property type="entry name" value="Prot_inh_ecotin_gammaproteobac"/>
</dbReference>
<dbReference type="NCBIfam" id="NF002987">
    <property type="entry name" value="PRK03719.1"/>
    <property type="match status" value="1"/>
</dbReference>
<dbReference type="PANTHER" id="PTHR35890">
    <property type="match status" value="1"/>
</dbReference>
<dbReference type="PANTHER" id="PTHR35890:SF3">
    <property type="entry name" value="ECOTIN"/>
    <property type="match status" value="1"/>
</dbReference>
<dbReference type="Pfam" id="PF03974">
    <property type="entry name" value="Ecotin"/>
    <property type="match status" value="1"/>
</dbReference>
<dbReference type="PIRSF" id="PIRSF006865">
    <property type="entry name" value="Prot_inh_ecotin"/>
    <property type="match status" value="1"/>
</dbReference>
<dbReference type="SUPFAM" id="SSF49772">
    <property type="entry name" value="Ecotin, trypsin inhibitor"/>
    <property type="match status" value="1"/>
</dbReference>
<organism>
    <name type="scientific">Yersinia pestis bv. Antiqua (strain Angola)</name>
    <dbReference type="NCBI Taxonomy" id="349746"/>
    <lineage>
        <taxon>Bacteria</taxon>
        <taxon>Pseudomonadati</taxon>
        <taxon>Pseudomonadota</taxon>
        <taxon>Gammaproteobacteria</taxon>
        <taxon>Enterobacterales</taxon>
        <taxon>Yersiniaceae</taxon>
        <taxon>Yersinia</taxon>
    </lineage>
</organism>
<name>ECOT_YERPG</name>
<reference key="1">
    <citation type="journal article" date="2010" name="J. Bacteriol.">
        <title>Genome sequence of the deep-rooted Yersinia pestis strain Angola reveals new insights into the evolution and pangenome of the plague bacterium.</title>
        <authorList>
            <person name="Eppinger M."/>
            <person name="Worsham P.L."/>
            <person name="Nikolich M.P."/>
            <person name="Riley D.R."/>
            <person name="Sebastian Y."/>
            <person name="Mou S."/>
            <person name="Achtman M."/>
            <person name="Lindler L.E."/>
            <person name="Ravel J."/>
        </authorList>
    </citation>
    <scope>NUCLEOTIDE SEQUENCE [LARGE SCALE GENOMIC DNA]</scope>
    <source>
        <strain>Angola</strain>
    </source>
</reference>
<gene>
    <name evidence="1" type="primary">eco</name>
    <name type="ordered locus">YpAngola_A1316</name>
</gene>
<evidence type="ECO:0000255" key="1">
    <source>
        <dbReference type="HAMAP-Rule" id="MF_00706"/>
    </source>
</evidence>